<name>FAEHP_METB6</name>
<gene>
    <name evidence="1" type="primary">fae-hps</name>
    <name type="ordered locus">Mboo_0772</name>
</gene>
<accession>A7I6C9</accession>
<sequence length="393" mass="42597">MYLVGEALIGEGAELAHIDLLLGSKEGPVGSAFANAVSQLSMGHTPLLAVVRPNLLTKPATVIIPKVTLKDMEQVNEMFGPVQAAVAKAIADSLEEGAFKDIDIEGIAIIASAFVHPEAKDYNRIYRYNYGATKLALHRALDKFPDEKTLVYEKDRAAHGIMGFKVQRLWDPPYLQVAMDLVDMGKVAQVLKEVPQNDHVIIEAGTPLIKKFGLNVIGEIRKLRPNAFIIADMKILDTGNLEARMAADATADAVVVSGLAPTSTIEKAISEARKVGIYSIIDMLNVQNPAKLIEKLKVKPDIVELHRAIDTEETAHAWGDIPAMKKAAGGKLLVATAGGIRVEVVKDALKAGADILVVGRSITASKDIGHATDEFLDQLNREEIDQFRIMTDF</sequence>
<reference key="1">
    <citation type="journal article" date="2015" name="Microbiology">
        <title>Genome of Methanoregula boonei 6A8 reveals adaptations to oligotrophic peatland environments.</title>
        <authorList>
            <person name="Braeuer S."/>
            <person name="Cadillo-Quiroz H."/>
            <person name="Kyrpides N."/>
            <person name="Woyke T."/>
            <person name="Goodwin L."/>
            <person name="Detter C."/>
            <person name="Podell S."/>
            <person name="Yavitt J.B."/>
            <person name="Zinder S.H."/>
        </authorList>
    </citation>
    <scope>NUCLEOTIDE SEQUENCE [LARGE SCALE GENOMIC DNA]</scope>
    <source>
        <strain>DSM 21154 / JCM 14090 / 6A8</strain>
    </source>
</reference>
<feature type="chain" id="PRO_1000067322" description="Bifunctional enzyme Fae/Hps">
    <location>
        <begin position="1"/>
        <end position="393"/>
    </location>
</feature>
<feature type="region of interest" description="Formaldehyde-activating enzyme" evidence="1">
    <location>
        <begin position="1"/>
        <end position="161"/>
    </location>
</feature>
<feature type="region of interest" description="3-hexulose-6-phosphate synthase" evidence="1">
    <location>
        <begin position="162"/>
        <end position="393"/>
    </location>
</feature>
<feature type="active site" description="Proton donor" evidence="1">
    <location>
        <position position="17"/>
    </location>
</feature>
<feature type="binding site" evidence="1">
    <location>
        <position position="19"/>
    </location>
    <ligand>
        <name>substrate</name>
    </ligand>
</feature>
<feature type="binding site" evidence="1">
    <location>
        <position position="48"/>
    </location>
    <ligand>
        <name>substrate</name>
    </ligand>
</feature>
<feature type="binding site" evidence="1">
    <location>
        <position position="66"/>
    </location>
    <ligand>
        <name>substrate</name>
    </ligand>
</feature>
<feature type="binding site" evidence="1">
    <location>
        <position position="68"/>
    </location>
    <ligand>
        <name>substrate</name>
    </ligand>
</feature>
<feature type="binding site" evidence="1">
    <location>
        <position position="83"/>
    </location>
    <ligand>
        <name>substrate</name>
    </ligand>
</feature>
<evidence type="ECO:0000255" key="1">
    <source>
        <dbReference type="HAMAP-Rule" id="MF_01268"/>
    </source>
</evidence>
<proteinExistence type="inferred from homology"/>
<dbReference type="EC" id="4.2.1.147" evidence="1"/>
<dbReference type="EC" id="4.1.2.43" evidence="1"/>
<dbReference type="EMBL" id="CP000780">
    <property type="protein sequence ID" value="ABS55290.1"/>
    <property type="molecule type" value="Genomic_DNA"/>
</dbReference>
<dbReference type="RefSeq" id="WP_012106313.1">
    <property type="nucleotide sequence ID" value="NC_009712.1"/>
</dbReference>
<dbReference type="SMR" id="A7I6C9"/>
<dbReference type="STRING" id="456442.Mboo_0772"/>
<dbReference type="GeneID" id="5410712"/>
<dbReference type="KEGG" id="mbn:Mboo_0772"/>
<dbReference type="eggNOG" id="arCOG00103">
    <property type="taxonomic scope" value="Archaea"/>
</dbReference>
<dbReference type="HOGENOM" id="CLU_701335_0_0_2"/>
<dbReference type="OrthoDB" id="64276at2157"/>
<dbReference type="UniPathway" id="UPA00293"/>
<dbReference type="Proteomes" id="UP000002408">
    <property type="component" value="Chromosome"/>
</dbReference>
<dbReference type="GO" id="GO:0033982">
    <property type="term" value="F:3-dehydro-L-gulonate-6-phosphate decarboxylase activity"/>
    <property type="evidence" value="ECO:0007669"/>
    <property type="project" value="TreeGrafter"/>
</dbReference>
<dbReference type="GO" id="GO:0016840">
    <property type="term" value="F:carbon-nitrogen lyase activity"/>
    <property type="evidence" value="ECO:0007669"/>
    <property type="project" value="InterPro"/>
</dbReference>
<dbReference type="GO" id="GO:0043801">
    <property type="term" value="F:hexulose-6-phosphate synthase activity"/>
    <property type="evidence" value="ECO:0007669"/>
    <property type="project" value="UniProtKB-UniRule"/>
</dbReference>
<dbReference type="GO" id="GO:0016836">
    <property type="term" value="F:hydro-lyase activity"/>
    <property type="evidence" value="ECO:0007669"/>
    <property type="project" value="UniProtKB-UniRule"/>
</dbReference>
<dbReference type="GO" id="GO:0004590">
    <property type="term" value="F:orotidine-5'-phosphate decarboxylase activity"/>
    <property type="evidence" value="ECO:0007669"/>
    <property type="project" value="InterPro"/>
</dbReference>
<dbReference type="GO" id="GO:0006207">
    <property type="term" value="P:'de novo' pyrimidine nucleobase biosynthetic process"/>
    <property type="evidence" value="ECO:0007669"/>
    <property type="project" value="InterPro"/>
</dbReference>
<dbReference type="GO" id="GO:0016051">
    <property type="term" value="P:carbohydrate biosynthetic process"/>
    <property type="evidence" value="ECO:0007669"/>
    <property type="project" value="UniProtKB-UniRule"/>
</dbReference>
<dbReference type="GO" id="GO:0019854">
    <property type="term" value="P:L-ascorbic acid catabolic process"/>
    <property type="evidence" value="ECO:0007669"/>
    <property type="project" value="TreeGrafter"/>
</dbReference>
<dbReference type="CDD" id="cd04726">
    <property type="entry name" value="KGPDC_HPS"/>
    <property type="match status" value="1"/>
</dbReference>
<dbReference type="FunFam" id="3.20.20.70:FF:000022">
    <property type="entry name" value="3-keto-L-gulonate-6-phosphate decarboxylase UlaD"/>
    <property type="match status" value="1"/>
</dbReference>
<dbReference type="FunFam" id="3.30.230.60:FF:000001">
    <property type="entry name" value="5,6,7,8-tetrahydromethanopterin hydro-lyase"/>
    <property type="match status" value="1"/>
</dbReference>
<dbReference type="Gene3D" id="3.20.20.70">
    <property type="entry name" value="Aldolase class I"/>
    <property type="match status" value="1"/>
</dbReference>
<dbReference type="Gene3D" id="3.30.230.60">
    <property type="entry name" value="Formaldehyde-activating enzyme"/>
    <property type="match status" value="1"/>
</dbReference>
<dbReference type="HAMAP" id="MF_01268">
    <property type="entry name" value="Fae_Hps"/>
    <property type="match status" value="1"/>
</dbReference>
<dbReference type="InterPro" id="IPR013785">
    <property type="entry name" value="Aldolase_TIM"/>
</dbReference>
<dbReference type="InterPro" id="IPR020868">
    <property type="entry name" value="Fae/Hps"/>
</dbReference>
<dbReference type="InterPro" id="IPR014826">
    <property type="entry name" value="HCHO-activating_enzyme"/>
</dbReference>
<dbReference type="InterPro" id="IPR037075">
    <property type="entry name" value="HCHO-activating_enzyme_sf"/>
</dbReference>
<dbReference type="InterPro" id="IPR041710">
    <property type="entry name" value="HPS/KGPDC"/>
</dbReference>
<dbReference type="InterPro" id="IPR001754">
    <property type="entry name" value="OMPdeCOase_dom"/>
</dbReference>
<dbReference type="InterPro" id="IPR020568">
    <property type="entry name" value="Ribosomal_Su5_D2-typ_SF"/>
</dbReference>
<dbReference type="InterPro" id="IPR011060">
    <property type="entry name" value="RibuloseP-bd_barrel"/>
</dbReference>
<dbReference type="NCBIfam" id="TIGR03126">
    <property type="entry name" value="one_C_fae"/>
    <property type="match status" value="1"/>
</dbReference>
<dbReference type="NCBIfam" id="NF009833">
    <property type="entry name" value="PRK13307.1"/>
    <property type="match status" value="1"/>
</dbReference>
<dbReference type="PANTHER" id="PTHR35039">
    <property type="entry name" value="3-KETO-L-GULONATE-6-PHOSPHATE DECARBOXYLASE SGBH-RELATED"/>
    <property type="match status" value="1"/>
</dbReference>
<dbReference type="PANTHER" id="PTHR35039:SF3">
    <property type="entry name" value="3-KETO-L-GULONATE-6-PHOSPHATE DECARBOXYLASE SGBH-RELATED"/>
    <property type="match status" value="1"/>
</dbReference>
<dbReference type="Pfam" id="PF08714">
    <property type="entry name" value="Fae"/>
    <property type="match status" value="1"/>
</dbReference>
<dbReference type="Pfam" id="PF00215">
    <property type="entry name" value="OMPdecase"/>
    <property type="match status" value="1"/>
</dbReference>
<dbReference type="SMART" id="SM00934">
    <property type="entry name" value="OMPdecase"/>
    <property type="match status" value="1"/>
</dbReference>
<dbReference type="SUPFAM" id="SSF54211">
    <property type="entry name" value="Ribosomal protein S5 domain 2-like"/>
    <property type="match status" value="1"/>
</dbReference>
<dbReference type="SUPFAM" id="SSF51366">
    <property type="entry name" value="Ribulose-phoshate binding barrel"/>
    <property type="match status" value="1"/>
</dbReference>
<organism>
    <name type="scientific">Methanoregula boonei (strain DSM 21154 / JCM 14090 / 6A8)</name>
    <dbReference type="NCBI Taxonomy" id="456442"/>
    <lineage>
        <taxon>Archaea</taxon>
        <taxon>Methanobacteriati</taxon>
        <taxon>Methanobacteriota</taxon>
        <taxon>Stenosarchaea group</taxon>
        <taxon>Methanomicrobia</taxon>
        <taxon>Methanomicrobiales</taxon>
        <taxon>Methanoregulaceae</taxon>
        <taxon>Methanoregula</taxon>
    </lineage>
</organism>
<protein>
    <recommendedName>
        <fullName evidence="1">Bifunctional enzyme Fae/Hps</fullName>
    </recommendedName>
    <domain>
        <recommendedName>
            <fullName evidence="1">5,6,7,8-tetrahydromethanopterin hydro-lyase</fullName>
            <ecNumber evidence="1">4.2.1.147</ecNumber>
        </recommendedName>
        <alternativeName>
            <fullName evidence="1">Formaldehyde-activating enzyme</fullName>
            <shortName evidence="1">Fae</shortName>
        </alternativeName>
    </domain>
    <domain>
        <recommendedName>
            <fullName evidence="1">3-hexulose-6-phosphate synthase</fullName>
            <shortName evidence="1">HPS</shortName>
            <ecNumber evidence="1">4.1.2.43</ecNumber>
        </recommendedName>
        <alternativeName>
            <fullName evidence="1">D-arabino-3-hexulose-6-phosphate formaldehyde lyase</fullName>
        </alternativeName>
    </domain>
</protein>
<comment type="function">
    <text evidence="1">Catalyzes the condensation of formaldehyde with tetrahydromethanopterin (H(4)MPT) to 5,10-methylenetetrahydromethanopterin.</text>
</comment>
<comment type="function">
    <text evidence="1">Catalyzes the reversible formation of ribulose-5-phosphate and formaldehyde from 3-hexulose-6-phosphate.</text>
</comment>
<comment type="catalytic activity">
    <reaction evidence="1">
        <text>5,6,7,8-tetrahydromethanopterin + formaldehyde = 5,10-methylenetetrahydromethanopterin + H2O</text>
        <dbReference type="Rhea" id="RHEA:24678"/>
        <dbReference type="ChEBI" id="CHEBI:15377"/>
        <dbReference type="ChEBI" id="CHEBI:16842"/>
        <dbReference type="ChEBI" id="CHEBI:57818"/>
        <dbReference type="ChEBI" id="CHEBI:58103"/>
        <dbReference type="EC" id="4.2.1.147"/>
    </reaction>
</comment>
<comment type="catalytic activity">
    <reaction evidence="1">
        <text>D-ribulose 5-phosphate + formaldehyde = D-arabino-hex-3-ulose 6-phosphate</text>
        <dbReference type="Rhea" id="RHEA:25201"/>
        <dbReference type="ChEBI" id="CHEBI:16842"/>
        <dbReference type="ChEBI" id="CHEBI:58121"/>
        <dbReference type="ChEBI" id="CHEBI:58542"/>
        <dbReference type="EC" id="4.1.2.43"/>
    </reaction>
</comment>
<comment type="pathway">
    <text evidence="1">Carbohydrate biosynthesis; D-ribose 5-phosphate biosynthesis.</text>
</comment>
<comment type="similarity">
    <text evidence="1">In the N-terminal section; belongs to the formaldehyde-activating enzyme family.</text>
</comment>
<comment type="similarity">
    <text evidence="1">In the C-terminal section; belongs to the HPS/KGPDC family. HPS subfamily.</text>
</comment>
<keyword id="KW-0119">Carbohydrate metabolism</keyword>
<keyword id="KW-0456">Lyase</keyword>
<keyword id="KW-0511">Multifunctional enzyme</keyword>
<keyword id="KW-1185">Reference proteome</keyword>